<organism>
    <name type="scientific">Mus musculus</name>
    <name type="common">Mouse</name>
    <dbReference type="NCBI Taxonomy" id="10090"/>
    <lineage>
        <taxon>Eukaryota</taxon>
        <taxon>Metazoa</taxon>
        <taxon>Chordata</taxon>
        <taxon>Craniata</taxon>
        <taxon>Vertebrata</taxon>
        <taxon>Euteleostomi</taxon>
        <taxon>Mammalia</taxon>
        <taxon>Eutheria</taxon>
        <taxon>Euarchontoglires</taxon>
        <taxon>Glires</taxon>
        <taxon>Rodentia</taxon>
        <taxon>Myomorpha</taxon>
        <taxon>Muroidea</taxon>
        <taxon>Muridae</taxon>
        <taxon>Murinae</taxon>
        <taxon>Mus</taxon>
        <taxon>Mus</taxon>
    </lineage>
</organism>
<dbReference type="EMBL" id="AF210433">
    <property type="protein sequence ID" value="AAF72874.1"/>
    <property type="molecule type" value="mRNA"/>
</dbReference>
<dbReference type="EMBL" id="BX537301">
    <property type="status" value="NOT_ANNOTATED_CDS"/>
    <property type="molecule type" value="Genomic_DNA"/>
</dbReference>
<dbReference type="EMBL" id="CH466552">
    <property type="protein sequence ID" value="EDL30116.1"/>
    <property type="molecule type" value="Genomic_DNA"/>
</dbReference>
<dbReference type="EMBL" id="BC046983">
    <property type="protein sequence ID" value="AAH46983.1"/>
    <property type="molecule type" value="mRNA"/>
</dbReference>
<dbReference type="CCDS" id="CCDS18720.1"/>
<dbReference type="RefSeq" id="NP_001116464.1">
    <property type="nucleotide sequence ID" value="NM_001122992.1"/>
</dbReference>
<dbReference type="RefSeq" id="NP_064669.2">
    <property type="nucleotide sequence ID" value="NM_020273.2"/>
</dbReference>
<dbReference type="RefSeq" id="XP_006539141.1">
    <property type="nucleotide sequence ID" value="XM_006539078.4"/>
</dbReference>
<dbReference type="RefSeq" id="XP_006539142.1">
    <property type="nucleotide sequence ID" value="XM_006539079.5"/>
</dbReference>
<dbReference type="RefSeq" id="XP_006539143.1">
    <property type="nucleotide sequence ID" value="XM_006539080.5"/>
</dbReference>
<dbReference type="RefSeq" id="XP_017175821.1">
    <property type="nucleotide sequence ID" value="XM_017320332.3"/>
</dbReference>
<dbReference type="RefSeq" id="XP_036020167.1">
    <property type="nucleotide sequence ID" value="XM_036164274.1"/>
</dbReference>
<dbReference type="RefSeq" id="XP_036020168.1">
    <property type="nucleotide sequence ID" value="XM_036164275.1"/>
</dbReference>
<dbReference type="RefSeq" id="XP_036020170.1">
    <property type="nucleotide sequence ID" value="XM_036164277.1"/>
</dbReference>
<dbReference type="SMR" id="Q9JL60"/>
<dbReference type="BioGRID" id="208184">
    <property type="interactions" value="7"/>
</dbReference>
<dbReference type="FunCoup" id="Q9JL60">
    <property type="interactions" value="3612"/>
</dbReference>
<dbReference type="IntAct" id="Q9JL60">
    <property type="interactions" value="4"/>
</dbReference>
<dbReference type="STRING" id="10090.ENSMUSP00000131331"/>
<dbReference type="iPTMnet" id="Q9JL60"/>
<dbReference type="PhosphoSitePlus" id="Q9JL60"/>
<dbReference type="PaxDb" id="10090-ENSMUSP00000131331"/>
<dbReference type="PeptideAtlas" id="Q9JL60"/>
<dbReference type="ProteomicsDB" id="263379"/>
<dbReference type="Pumba" id="Q9JL60"/>
<dbReference type="Antibodypedia" id="30978">
    <property type="antibodies" value="166 antibodies from 24 providers"/>
</dbReference>
<dbReference type="DNASU" id="56809"/>
<dbReference type="Ensembl" id="ENSMUST00000030733.9">
    <property type="protein sequence ID" value="ENSMUSP00000030733.3"/>
    <property type="gene ID" value="ENSMUSG00000028901.14"/>
</dbReference>
<dbReference type="Ensembl" id="ENSMUST00000105964.2">
    <property type="protein sequence ID" value="ENSMUSP00000101584.2"/>
    <property type="gene ID" value="ENSMUSG00000028901.14"/>
</dbReference>
<dbReference type="Ensembl" id="ENSMUST00000105965.8">
    <property type="protein sequence ID" value="ENSMUSP00000101585.2"/>
    <property type="gene ID" value="ENSMUSG00000028901.14"/>
</dbReference>
<dbReference type="Ensembl" id="ENSMUST00000168553.8">
    <property type="protein sequence ID" value="ENSMUSP00000131331.2"/>
    <property type="gene ID" value="ENSMUSG00000028901.14"/>
</dbReference>
<dbReference type="GeneID" id="56809"/>
<dbReference type="KEGG" id="mmu:56809"/>
<dbReference type="UCSC" id="uc008vat.2">
    <property type="organism name" value="mouse"/>
</dbReference>
<dbReference type="AGR" id="MGI:2135604"/>
<dbReference type="CTD" id="10691"/>
<dbReference type="MGI" id="MGI:2135604">
    <property type="gene designation" value="Gmeb1"/>
</dbReference>
<dbReference type="VEuPathDB" id="HostDB:ENSMUSG00000028901"/>
<dbReference type="eggNOG" id="KOG4333">
    <property type="taxonomic scope" value="Eukaryota"/>
</dbReference>
<dbReference type="GeneTree" id="ENSGT00410000025596"/>
<dbReference type="HOGENOM" id="CLU_030344_1_0_1"/>
<dbReference type="InParanoid" id="Q9JL60"/>
<dbReference type="OMA" id="SPINQQA"/>
<dbReference type="OrthoDB" id="5792412at2759"/>
<dbReference type="PhylomeDB" id="Q9JL60"/>
<dbReference type="TreeFam" id="TF317090"/>
<dbReference type="BioGRID-ORCS" id="56809">
    <property type="hits" value="3 hits in 79 CRISPR screens"/>
</dbReference>
<dbReference type="ChiTaRS" id="Gmeb1">
    <property type="organism name" value="mouse"/>
</dbReference>
<dbReference type="PRO" id="PR:Q9JL60"/>
<dbReference type="Proteomes" id="UP000000589">
    <property type="component" value="Chromosome 4"/>
</dbReference>
<dbReference type="RNAct" id="Q9JL60">
    <property type="molecule type" value="protein"/>
</dbReference>
<dbReference type="Bgee" id="ENSMUSG00000028901">
    <property type="expression patterns" value="Expressed in animal zygote and 241 other cell types or tissues"/>
</dbReference>
<dbReference type="GO" id="GO:0005737">
    <property type="term" value="C:cytoplasm"/>
    <property type="evidence" value="ECO:0007669"/>
    <property type="project" value="UniProtKB-SubCell"/>
</dbReference>
<dbReference type="GO" id="GO:0005654">
    <property type="term" value="C:nucleoplasm"/>
    <property type="evidence" value="ECO:0007669"/>
    <property type="project" value="Ensembl"/>
</dbReference>
<dbReference type="GO" id="GO:0005634">
    <property type="term" value="C:nucleus"/>
    <property type="evidence" value="ECO:0000314"/>
    <property type="project" value="MGI"/>
</dbReference>
<dbReference type="GO" id="GO:0001228">
    <property type="term" value="F:DNA-binding transcription activator activity, RNA polymerase II-specific"/>
    <property type="evidence" value="ECO:0000314"/>
    <property type="project" value="NTNU_SB"/>
</dbReference>
<dbReference type="GO" id="GO:0003700">
    <property type="term" value="F:DNA-binding transcription factor activity"/>
    <property type="evidence" value="ECO:0000314"/>
    <property type="project" value="MGI"/>
</dbReference>
<dbReference type="GO" id="GO:0051008">
    <property type="term" value="F:Hsp27 protein binding"/>
    <property type="evidence" value="ECO:0007669"/>
    <property type="project" value="Ensembl"/>
</dbReference>
<dbReference type="GO" id="GO:0042802">
    <property type="term" value="F:identical protein binding"/>
    <property type="evidence" value="ECO:0007669"/>
    <property type="project" value="Ensembl"/>
</dbReference>
<dbReference type="GO" id="GO:0046872">
    <property type="term" value="F:metal ion binding"/>
    <property type="evidence" value="ECO:0007669"/>
    <property type="project" value="UniProtKB-KW"/>
</dbReference>
<dbReference type="GO" id="GO:0000978">
    <property type="term" value="F:RNA polymerase II cis-regulatory region sequence-specific DNA binding"/>
    <property type="evidence" value="ECO:0000314"/>
    <property type="project" value="NTNU_SB"/>
</dbReference>
<dbReference type="GO" id="GO:0045944">
    <property type="term" value="P:positive regulation of transcription by RNA polymerase II"/>
    <property type="evidence" value="ECO:0000314"/>
    <property type="project" value="NTNU_SB"/>
</dbReference>
<dbReference type="FunFam" id="3.10.390.10:FF:000003">
    <property type="entry name" value="glucocorticoid modulatory element-binding protein 1 isoform X2"/>
    <property type="match status" value="1"/>
</dbReference>
<dbReference type="Gene3D" id="3.10.390.10">
    <property type="entry name" value="SAND domain-like"/>
    <property type="match status" value="1"/>
</dbReference>
<dbReference type="InterPro" id="IPR010919">
    <property type="entry name" value="SAND-like_dom_sf"/>
</dbReference>
<dbReference type="InterPro" id="IPR000770">
    <property type="entry name" value="SAND_dom"/>
</dbReference>
<dbReference type="PANTHER" id="PTHR10417">
    <property type="entry name" value="GLUCOCORTICOID MODULATORY ELEMENT-BINDING PROTEIN"/>
    <property type="match status" value="1"/>
</dbReference>
<dbReference type="PANTHER" id="PTHR10417:SF3">
    <property type="entry name" value="GLUCOCORTICOID MODULATORY ELEMENT-BINDING PROTEIN 1"/>
    <property type="match status" value="1"/>
</dbReference>
<dbReference type="Pfam" id="PF01342">
    <property type="entry name" value="SAND"/>
    <property type="match status" value="1"/>
</dbReference>
<dbReference type="SMART" id="SM00258">
    <property type="entry name" value="SAND"/>
    <property type="match status" value="1"/>
</dbReference>
<dbReference type="SUPFAM" id="SSF63763">
    <property type="entry name" value="SAND domain-like"/>
    <property type="match status" value="1"/>
</dbReference>
<dbReference type="PROSITE" id="PS50864">
    <property type="entry name" value="SAND"/>
    <property type="match status" value="1"/>
</dbReference>
<evidence type="ECO:0000250" key="1"/>
<evidence type="ECO:0000250" key="2">
    <source>
        <dbReference type="UniProtKB" id="Q9Y692"/>
    </source>
</evidence>
<evidence type="ECO:0000255" key="3"/>
<evidence type="ECO:0000255" key="4">
    <source>
        <dbReference type="PROSITE-ProRule" id="PRU00185"/>
    </source>
</evidence>
<evidence type="ECO:0000256" key="5">
    <source>
        <dbReference type="SAM" id="MobiDB-lite"/>
    </source>
</evidence>
<evidence type="ECO:0000305" key="6"/>
<comment type="function">
    <text evidence="1">Trans-acting factor that binds to glucocorticoid modulatory elements (GME) present in the TAT (tyrosine aminotransferase) promoter and increases sensitivity to low concentrations of glucocorticoids. Also binds to the transferrin receptor promoter (By similarity).</text>
</comment>
<comment type="subunit">
    <text evidence="1">Homodimer, and heterodimer of GMEB1 and GMEB2. Interacts with TRIM63 (By similarity). Interacts with the glucocorticoid receptor (NR3C1) and NCOA2/TIF2. May interact with HSP27 and CREB-binding protein (CBP).</text>
</comment>
<comment type="subcellular location">
    <subcellularLocation>
        <location>Nucleus</location>
    </subcellularLocation>
    <subcellularLocation>
        <location>Cytoplasm</location>
    </subcellularLocation>
    <text>May be also cytoplasmic.</text>
</comment>
<comment type="tissue specificity">
    <text>Ubiquitous. Low levels were detected in heart, brain, spleen, lung, liver, skeletal muscle, kidney and testis.</text>
</comment>
<reference key="1">
    <citation type="journal article" date="2000" name="FEBS Lett.">
        <title>Cloning of a mouse glucocorticoid modulatory element binding protein, a new member of the KDWK family.</title>
        <authorList>
            <person name="Jimenez-Lara A.M."/>
            <person name="Heine M.J.S."/>
            <person name="Gronemeyer H."/>
        </authorList>
    </citation>
    <scope>NUCLEOTIDE SEQUENCE [MRNA]</scope>
    <source>
        <tissue>Embryo</tissue>
    </source>
</reference>
<reference key="2">
    <citation type="journal article" date="2009" name="PLoS Biol.">
        <title>Lineage-specific biology revealed by a finished genome assembly of the mouse.</title>
        <authorList>
            <person name="Church D.M."/>
            <person name="Goodstadt L."/>
            <person name="Hillier L.W."/>
            <person name="Zody M.C."/>
            <person name="Goldstein S."/>
            <person name="She X."/>
            <person name="Bult C.J."/>
            <person name="Agarwala R."/>
            <person name="Cherry J.L."/>
            <person name="DiCuccio M."/>
            <person name="Hlavina W."/>
            <person name="Kapustin Y."/>
            <person name="Meric P."/>
            <person name="Maglott D."/>
            <person name="Birtle Z."/>
            <person name="Marques A.C."/>
            <person name="Graves T."/>
            <person name="Zhou S."/>
            <person name="Teague B."/>
            <person name="Potamousis K."/>
            <person name="Churas C."/>
            <person name="Place M."/>
            <person name="Herschleb J."/>
            <person name="Runnheim R."/>
            <person name="Forrest D."/>
            <person name="Amos-Landgraf J."/>
            <person name="Schwartz D.C."/>
            <person name="Cheng Z."/>
            <person name="Lindblad-Toh K."/>
            <person name="Eichler E.E."/>
            <person name="Ponting C.P."/>
        </authorList>
    </citation>
    <scope>NUCLEOTIDE SEQUENCE [LARGE SCALE GENOMIC DNA]</scope>
    <source>
        <strain>C57BL/6J</strain>
    </source>
</reference>
<reference key="3">
    <citation type="submission" date="2005-09" db="EMBL/GenBank/DDBJ databases">
        <authorList>
            <person name="Mural R.J."/>
            <person name="Adams M.D."/>
            <person name="Myers E.W."/>
            <person name="Smith H.O."/>
            <person name="Venter J.C."/>
        </authorList>
    </citation>
    <scope>NUCLEOTIDE SEQUENCE [LARGE SCALE GENOMIC DNA]</scope>
</reference>
<reference key="4">
    <citation type="journal article" date="2004" name="Genome Res.">
        <title>The status, quality, and expansion of the NIH full-length cDNA project: the Mammalian Gene Collection (MGC).</title>
        <authorList>
            <consortium name="The MGC Project Team"/>
        </authorList>
    </citation>
    <scope>NUCLEOTIDE SEQUENCE [LARGE SCALE MRNA]</scope>
    <source>
        <strain>FVB/N</strain>
        <tissue>Colon</tissue>
    </source>
</reference>
<reference key="5">
    <citation type="journal article" date="2010" name="Cell">
        <title>A tissue-specific atlas of mouse protein phosphorylation and expression.</title>
        <authorList>
            <person name="Huttlin E.L."/>
            <person name="Jedrychowski M.P."/>
            <person name="Elias J.E."/>
            <person name="Goswami T."/>
            <person name="Rad R."/>
            <person name="Beausoleil S.A."/>
            <person name="Villen J."/>
            <person name="Haas W."/>
            <person name="Sowa M.E."/>
            <person name="Gygi S.P."/>
        </authorList>
    </citation>
    <scope>IDENTIFICATION BY MASS SPECTROMETRY [LARGE SCALE ANALYSIS]</scope>
    <source>
        <tissue>Spleen</tissue>
    </source>
</reference>
<gene>
    <name type="primary">Gmeb1</name>
</gene>
<sequence>MANAEVSVPVGDVVVVPTEGNEGENPEDTKTQVILQLQPVQQGIYEAGSENSAAVVAVETHSIHKIEEGIDASSIEGNEDMEIAYPITCGESKAVLLWKKFVCPGINVKCVKFNDQLISPKHFVHLAGKSTLKDWKRAIRLGGIMLRKMMDSGQIDFYQHDKVCSNTCRSTKFDLLISSARAPVPGQQTSVVQTPTSADGNITQIAISEESMEEAGLEWNSALTAAVTMATEEGIKKESEEISEDTLMFWKGIADVGLMEEVVCNIQKEMEELLRGVQQRLIQAPFQVTDAAVLNNVANTFGLMDAVKRVLDNRRKQVEQGEEQFLYTLADLERQLEEQKKQAQDPRLKSQTVQNVVLMPVSTPKPPKRPRLQRPASTTVLSPSPVQQPQFTVISPITITPVGQSFSMGNIPVATLSQGSSPVTVHTLPSGPQLFRYATVVSSAKSNSPDTVTIHPSSSLALLSSTSMQDGSSLGNMATMVSPMELVAMESGLTSAIQAVESTSEDGQTIIEIDPAPDSEADDTEGKAVILETGLRTEEKVVAEMEEHQHQVHNVEIVVLED</sequence>
<keyword id="KW-0007">Acetylation</keyword>
<keyword id="KW-0175">Coiled coil</keyword>
<keyword id="KW-0963">Cytoplasm</keyword>
<keyword id="KW-0238">DNA-binding</keyword>
<keyword id="KW-0479">Metal-binding</keyword>
<keyword id="KW-0539">Nucleus</keyword>
<keyword id="KW-1185">Reference proteome</keyword>
<keyword id="KW-0804">Transcription</keyword>
<keyword id="KW-0805">Transcription regulation</keyword>
<keyword id="KW-0862">Zinc</keyword>
<feature type="initiator methionine" description="Removed" evidence="2">
    <location>
        <position position="1"/>
    </location>
</feature>
<feature type="chain" id="PRO_0000074090" description="Glucocorticoid modulatory element-binding protein 1">
    <location>
        <begin position="2"/>
        <end position="562"/>
    </location>
</feature>
<feature type="domain" description="SAND" evidence="4">
    <location>
        <begin position="72"/>
        <end position="156"/>
    </location>
</feature>
<feature type="region of interest" description="Disordered" evidence="5">
    <location>
        <begin position="360"/>
        <end position="384"/>
    </location>
</feature>
<feature type="coiled-coil region" evidence="3">
    <location>
        <begin position="311"/>
        <end position="355"/>
    </location>
</feature>
<feature type="compositionally biased region" description="Polar residues" evidence="5">
    <location>
        <begin position="375"/>
        <end position="384"/>
    </location>
</feature>
<feature type="binding site" evidence="1">
    <location>
        <position position="103"/>
    </location>
    <ligand>
        <name>Zn(2+)</name>
        <dbReference type="ChEBI" id="CHEBI:29105"/>
    </ligand>
</feature>
<feature type="binding site" evidence="1">
    <location>
        <position position="129"/>
    </location>
    <ligand>
        <name>DNA</name>
        <dbReference type="ChEBI" id="CHEBI:16991"/>
    </ligand>
</feature>
<feature type="binding site" evidence="1">
    <location>
        <position position="133"/>
    </location>
    <ligand>
        <name>DNA</name>
        <dbReference type="ChEBI" id="CHEBI:16991"/>
    </ligand>
</feature>
<feature type="binding site" evidence="1">
    <location>
        <position position="136"/>
    </location>
    <ligand>
        <name>DNA</name>
        <dbReference type="ChEBI" id="CHEBI:16991"/>
    </ligand>
</feature>
<feature type="binding site" evidence="1">
    <location>
        <position position="147"/>
    </location>
    <ligand>
        <name>DNA</name>
        <dbReference type="ChEBI" id="CHEBI:16991"/>
    </ligand>
</feature>
<feature type="binding site" evidence="1">
    <location>
        <position position="160"/>
    </location>
    <ligand>
        <name>Zn(2+)</name>
        <dbReference type="ChEBI" id="CHEBI:29105"/>
    </ligand>
</feature>
<feature type="binding site" evidence="1">
    <location>
        <position position="164"/>
    </location>
    <ligand>
        <name>Zn(2+)</name>
        <dbReference type="ChEBI" id="CHEBI:29105"/>
    </ligand>
</feature>
<feature type="binding site" evidence="1">
    <location>
        <position position="168"/>
    </location>
    <ligand>
        <name>Zn(2+)</name>
        <dbReference type="ChEBI" id="CHEBI:29105"/>
    </ligand>
</feature>
<feature type="modified residue" description="N-acetylalanine" evidence="2">
    <location>
        <position position="2"/>
    </location>
</feature>
<feature type="sequence conflict" description="In Ref. 1; AAF72874." evidence="6" ref="1">
    <original>V</original>
    <variation>I</variation>
    <location>
        <position position="263"/>
    </location>
</feature>
<protein>
    <recommendedName>
        <fullName>Glucocorticoid modulatory element-binding protein 1</fullName>
        <shortName>GMEB-1</shortName>
    </recommendedName>
</protein>
<name>GMEB1_MOUSE</name>
<proteinExistence type="evidence at protein level"/>
<accession>Q9JL60</accession>
<accession>Q80Y88</accession>